<reference key="1">
    <citation type="journal article" date="2001" name="Proc. Natl. Acad. Sci. U.S.A.">
        <title>Complete genomic sequence of Pasteurella multocida Pm70.</title>
        <authorList>
            <person name="May B.J."/>
            <person name="Zhang Q."/>
            <person name="Li L.L."/>
            <person name="Paustian M.L."/>
            <person name="Whittam T.S."/>
            <person name="Kapur V."/>
        </authorList>
    </citation>
    <scope>NUCLEOTIDE SEQUENCE [LARGE SCALE GENOMIC DNA]</scope>
    <source>
        <strain>Pm70</strain>
    </source>
</reference>
<keyword id="KW-0997">Cell inner membrane</keyword>
<keyword id="KW-1003">Cell membrane</keyword>
<keyword id="KW-0249">Electron transport</keyword>
<keyword id="KW-0472">Membrane</keyword>
<keyword id="KW-1185">Reference proteome</keyword>
<keyword id="KW-1278">Translocase</keyword>
<keyword id="KW-0812">Transmembrane</keyword>
<keyword id="KW-1133">Transmembrane helix</keyword>
<keyword id="KW-0813">Transport</keyword>
<dbReference type="EC" id="7.-.-.-" evidence="1"/>
<dbReference type="EMBL" id="AE004439">
    <property type="protein sequence ID" value="AAK02466.1"/>
    <property type="status" value="ALT_INIT"/>
    <property type="molecule type" value="Genomic_DNA"/>
</dbReference>
<dbReference type="SMR" id="Q9CNP5"/>
<dbReference type="STRING" id="272843.PM0382"/>
<dbReference type="EnsemblBacteria" id="AAK02466">
    <property type="protein sequence ID" value="AAK02466"/>
    <property type="gene ID" value="PM0382"/>
</dbReference>
<dbReference type="KEGG" id="pmu:PM0382"/>
<dbReference type="HOGENOM" id="CLU_046659_1_0_6"/>
<dbReference type="Proteomes" id="UP000000809">
    <property type="component" value="Chromosome"/>
</dbReference>
<dbReference type="GO" id="GO:0005886">
    <property type="term" value="C:plasma membrane"/>
    <property type="evidence" value="ECO:0007669"/>
    <property type="project" value="UniProtKB-SubCell"/>
</dbReference>
<dbReference type="GO" id="GO:0022900">
    <property type="term" value="P:electron transport chain"/>
    <property type="evidence" value="ECO:0007669"/>
    <property type="project" value="UniProtKB-UniRule"/>
</dbReference>
<dbReference type="HAMAP" id="MF_00478">
    <property type="entry name" value="RsxE_RnfE"/>
    <property type="match status" value="1"/>
</dbReference>
<dbReference type="InterPro" id="IPR003667">
    <property type="entry name" value="NqrDE/RnfAE"/>
</dbReference>
<dbReference type="InterPro" id="IPR010968">
    <property type="entry name" value="RnfE"/>
</dbReference>
<dbReference type="NCBIfam" id="NF009070">
    <property type="entry name" value="PRK12405.1"/>
    <property type="match status" value="1"/>
</dbReference>
<dbReference type="NCBIfam" id="TIGR01948">
    <property type="entry name" value="rnfE"/>
    <property type="match status" value="1"/>
</dbReference>
<dbReference type="PANTHER" id="PTHR30586">
    <property type="entry name" value="ELECTRON TRANSPORT COMPLEX PROTEIN RNFE"/>
    <property type="match status" value="1"/>
</dbReference>
<dbReference type="PANTHER" id="PTHR30586:SF0">
    <property type="entry name" value="ION-TRANSLOCATING OXIDOREDUCTASE COMPLEX SUBUNIT E"/>
    <property type="match status" value="1"/>
</dbReference>
<dbReference type="Pfam" id="PF02508">
    <property type="entry name" value="Rnf-Nqr"/>
    <property type="match status" value="1"/>
</dbReference>
<dbReference type="PIRSF" id="PIRSF006102">
    <property type="entry name" value="NQR_DE"/>
    <property type="match status" value="1"/>
</dbReference>
<evidence type="ECO:0000255" key="1">
    <source>
        <dbReference type="HAMAP-Rule" id="MF_00478"/>
    </source>
</evidence>
<evidence type="ECO:0000305" key="2"/>
<accession>Q9CNP5</accession>
<sequence length="224" mass="24428">MDQQSTLANTSTPSVWKTLFWQGVWKNNSTLVQLLGLCPLLAVSNSVTNALGLGIATLFVLICSNTVVSLFRKQIPHEIRIPIYVMIIATTVTVVQLLMNAYTYSLYQSLGIFIPLIVTNCIVIGRAEAFASKNPLSHAMFDGFAMGLGMCLSLVFLGAIREILGNGTLFDGIEHLLGDWAKGLRIELFHLDSHFLLAILPPGAFIGLGLILAIKNVIDQRNKA</sequence>
<gene>
    <name evidence="1" type="primary">rnfE</name>
    <name type="ordered locus">PM0382</name>
</gene>
<proteinExistence type="inferred from homology"/>
<name>RNFE_PASMU</name>
<organism>
    <name type="scientific">Pasteurella multocida (strain Pm70)</name>
    <dbReference type="NCBI Taxonomy" id="272843"/>
    <lineage>
        <taxon>Bacteria</taxon>
        <taxon>Pseudomonadati</taxon>
        <taxon>Pseudomonadota</taxon>
        <taxon>Gammaproteobacteria</taxon>
        <taxon>Pasteurellales</taxon>
        <taxon>Pasteurellaceae</taxon>
        <taxon>Pasteurella</taxon>
    </lineage>
</organism>
<comment type="function">
    <text evidence="1">Part of a membrane-bound complex that couples electron transfer with translocation of ions across the membrane.</text>
</comment>
<comment type="subunit">
    <text evidence="1">The complex is composed of six subunits: RnfA, RnfB, RnfC, RnfD, RnfE and RnfG.</text>
</comment>
<comment type="subcellular location">
    <subcellularLocation>
        <location evidence="1">Cell inner membrane</location>
        <topology evidence="1">Multi-pass membrane protein</topology>
    </subcellularLocation>
</comment>
<comment type="similarity">
    <text evidence="1">Belongs to the NqrDE/RnfAE family.</text>
</comment>
<comment type="sequence caution" evidence="2">
    <conflict type="erroneous initiation">
        <sequence resource="EMBL-CDS" id="AAK02466"/>
    </conflict>
</comment>
<feature type="chain" id="PRO_0000214274" description="Ion-translocating oxidoreductase complex subunit E">
    <location>
        <begin position="1"/>
        <end position="224"/>
    </location>
</feature>
<feature type="transmembrane region" description="Helical" evidence="1">
    <location>
        <begin position="51"/>
        <end position="71"/>
    </location>
</feature>
<feature type="transmembrane region" description="Helical" evidence="1">
    <location>
        <begin position="81"/>
        <end position="101"/>
    </location>
</feature>
<feature type="transmembrane region" description="Helical" evidence="1">
    <location>
        <begin position="105"/>
        <end position="125"/>
    </location>
</feature>
<feature type="transmembrane region" description="Helical" evidence="1">
    <location>
        <begin position="140"/>
        <end position="160"/>
    </location>
</feature>
<feature type="transmembrane region" description="Helical" evidence="1">
    <location>
        <begin position="194"/>
        <end position="214"/>
    </location>
</feature>
<protein>
    <recommendedName>
        <fullName evidence="1">Ion-translocating oxidoreductase complex subunit E</fullName>
        <ecNumber evidence="1">7.-.-.-</ecNumber>
    </recommendedName>
    <alternativeName>
        <fullName evidence="1">Rnf electron transport complex subunit E</fullName>
    </alternativeName>
</protein>